<accession>P41152</accession>
<protein>
    <recommendedName>
        <fullName>Heat shock factor protein HSF30</fullName>
    </recommendedName>
    <alternativeName>
        <fullName>Heat shock transcription factor 30</fullName>
        <shortName>HSTF 30</shortName>
    </alternativeName>
    <alternativeName>
        <fullName>Heat stress transcription factor</fullName>
    </alternativeName>
</protein>
<evidence type="ECO:0000250" key="1"/>
<evidence type="ECO:0000305" key="2"/>
<sequence length="351" mass="40179">MEDVMKVKVEEDGIPTAVLPMEGLHDVGPPPFLSKTYEMVEDSSTDQVISWSTTRNSFIVWDSHKFSTTLLPRFFKHSNFSSFIRQLNTYGFRKVDPDRWEFANEGFLGGQKHLLKTIKRRRNVGQSMNQQGSGACIEIGYYGMEEELERLKRDKNVLMTEIVKLRQQQQSTRNQIIAMGEKIETQERKQVQMMSFLAKIFSNPTFLQQYLDKQVHRKDKQRIEVGQKRRLTMTPSVTGSDQPMNYSSSLQESEAELASIEMLFSAAMDNESSSNVRPDSVVTANGTDMEPVADDIWEELLSEDLISGDRAAEEVVVVEQPEFDVEVEDLVVKTPEWGEELQDLVDQLGFL</sequence>
<keyword id="KW-0010">Activator</keyword>
<keyword id="KW-0238">DNA-binding</keyword>
<keyword id="KW-0539">Nucleus</keyword>
<keyword id="KW-0597">Phosphoprotein</keyword>
<keyword id="KW-0346">Stress response</keyword>
<keyword id="KW-0804">Transcription</keyword>
<keyword id="KW-0805">Transcription regulation</keyword>
<dbReference type="EMBL" id="X67601">
    <property type="protein sequence ID" value="CAA47870.1"/>
    <property type="molecule type" value="mRNA"/>
</dbReference>
<dbReference type="PIR" id="S25480">
    <property type="entry name" value="S25480"/>
</dbReference>
<dbReference type="SMR" id="P41152"/>
<dbReference type="GO" id="GO:0005634">
    <property type="term" value="C:nucleus"/>
    <property type="evidence" value="ECO:0007669"/>
    <property type="project" value="UniProtKB-SubCell"/>
</dbReference>
<dbReference type="GO" id="GO:0003700">
    <property type="term" value="F:DNA-binding transcription factor activity"/>
    <property type="evidence" value="ECO:0007669"/>
    <property type="project" value="InterPro"/>
</dbReference>
<dbReference type="GO" id="GO:0000978">
    <property type="term" value="F:RNA polymerase II cis-regulatory region sequence-specific DNA binding"/>
    <property type="evidence" value="ECO:0007669"/>
    <property type="project" value="TreeGrafter"/>
</dbReference>
<dbReference type="GO" id="GO:0034605">
    <property type="term" value="P:cellular response to heat"/>
    <property type="evidence" value="ECO:0007669"/>
    <property type="project" value="TreeGrafter"/>
</dbReference>
<dbReference type="GO" id="GO:0006357">
    <property type="term" value="P:regulation of transcription by RNA polymerase II"/>
    <property type="evidence" value="ECO:0007669"/>
    <property type="project" value="TreeGrafter"/>
</dbReference>
<dbReference type="FunFam" id="1.10.10.10:FF:000057">
    <property type="entry name" value="Heat shock transcription factor 1"/>
    <property type="match status" value="1"/>
</dbReference>
<dbReference type="Gene3D" id="1.10.10.10">
    <property type="entry name" value="Winged helix-like DNA-binding domain superfamily/Winged helix DNA-binding domain"/>
    <property type="match status" value="1"/>
</dbReference>
<dbReference type="InterPro" id="IPR000232">
    <property type="entry name" value="HSF_DNA-bd"/>
</dbReference>
<dbReference type="InterPro" id="IPR036388">
    <property type="entry name" value="WH-like_DNA-bd_sf"/>
</dbReference>
<dbReference type="InterPro" id="IPR036390">
    <property type="entry name" value="WH_DNA-bd_sf"/>
</dbReference>
<dbReference type="PANTHER" id="PTHR10015">
    <property type="entry name" value="HEAT SHOCK TRANSCRIPTION FACTOR"/>
    <property type="match status" value="1"/>
</dbReference>
<dbReference type="PANTHER" id="PTHR10015:SF338">
    <property type="entry name" value="HEAT STRESS TRANSCRIPTION FACTOR A-2"/>
    <property type="match status" value="1"/>
</dbReference>
<dbReference type="Pfam" id="PF00447">
    <property type="entry name" value="HSF_DNA-bind"/>
    <property type="match status" value="1"/>
</dbReference>
<dbReference type="PRINTS" id="PR00056">
    <property type="entry name" value="HSFDOMAIN"/>
</dbReference>
<dbReference type="SMART" id="SM00415">
    <property type="entry name" value="HSF"/>
    <property type="match status" value="1"/>
</dbReference>
<dbReference type="SUPFAM" id="SSF46785">
    <property type="entry name" value="Winged helix' DNA-binding domain"/>
    <property type="match status" value="1"/>
</dbReference>
<dbReference type="PROSITE" id="PS00434">
    <property type="entry name" value="HSF_DOMAIN"/>
    <property type="match status" value="1"/>
</dbReference>
<comment type="function">
    <text evidence="1">DNA-binding protein that specifically binds heat shock promoter elements (HSE) and activates transcription.</text>
</comment>
<comment type="subunit">
    <text>Homotrimer.</text>
</comment>
<comment type="subcellular location">
    <subcellularLocation>
        <location>Nucleus</location>
    </subcellularLocation>
</comment>
<comment type="PTM">
    <text evidence="1">Exhibits temperature-dependent phosphorylation.</text>
</comment>
<comment type="similarity">
    <text evidence="2">Belongs to the HSF family.</text>
</comment>
<name>HSF30_SOLPE</name>
<reference key="1">
    <citation type="journal article" date="1993" name="Plant Physiol.">
        <title>Two cDNAs for tomato heat stress transcription factors.</title>
        <authorList>
            <person name="Scharf K.D."/>
            <person name="Rose S."/>
            <person name="Thierfelder J."/>
            <person name="Nover L."/>
        </authorList>
    </citation>
    <scope>NUCLEOTIDE SEQUENCE [MRNA]</scope>
</reference>
<gene>
    <name type="primary">HSF30</name>
</gene>
<organism>
    <name type="scientific">Solanum peruvianum</name>
    <name type="common">Peruvian tomato</name>
    <name type="synonym">Lycopersicon peruvianum</name>
    <dbReference type="NCBI Taxonomy" id="4082"/>
    <lineage>
        <taxon>Eukaryota</taxon>
        <taxon>Viridiplantae</taxon>
        <taxon>Streptophyta</taxon>
        <taxon>Embryophyta</taxon>
        <taxon>Tracheophyta</taxon>
        <taxon>Spermatophyta</taxon>
        <taxon>Magnoliopsida</taxon>
        <taxon>eudicotyledons</taxon>
        <taxon>Gunneridae</taxon>
        <taxon>Pentapetalae</taxon>
        <taxon>asterids</taxon>
        <taxon>lamiids</taxon>
        <taxon>Solanales</taxon>
        <taxon>Solanaceae</taxon>
        <taxon>Solanoideae</taxon>
        <taxon>Solaneae</taxon>
        <taxon>Solanum</taxon>
        <taxon>Solanum subgen. Lycopersicon</taxon>
    </lineage>
</organism>
<proteinExistence type="evidence at transcript level"/>
<feature type="chain" id="PRO_0000124590" description="Heat shock factor protein HSF30">
    <location>
        <begin position="1"/>
        <end position="351"/>
    </location>
</feature>
<feature type="DNA-binding region" evidence="1">
    <location>
        <begin position="29"/>
        <end position="123"/>
    </location>
</feature>